<name>DHSO_BOVIN</name>
<comment type="function">
    <text evidence="2 4">Polyol dehydrogenase that catalyzes the reversible NAD(+)-dependent oxidation of various sugar alcohols. Is mostly active with xylitol, D-sorbitol (D-glucitol) and L-iditol as substrates, leading to the C2-oxidized products D-xylulose, D-fructose and L-sorbose, respectively (PubMed:9143345). Is a key enzyme in the polyol pathway that interconverts glucose and fructose via sorbitol, which constitutes an important alternate route for glucose metabolism. May play a role in sperm motility by using sorbitol as an alternative energy source for sperm motility (By similarity). Cannot use NADP(+) as the electron acceptor. Has no activity on ethanol, methanol, glycerol, galactitol and fructose 6-phosphate (PubMed:9143345).</text>
</comment>
<comment type="catalytic activity">
    <reaction evidence="4">
        <text>xylitol + NAD(+) = D-xylulose + NADH + H(+)</text>
        <dbReference type="Rhea" id="RHEA:20433"/>
        <dbReference type="ChEBI" id="CHEBI:15378"/>
        <dbReference type="ChEBI" id="CHEBI:17140"/>
        <dbReference type="ChEBI" id="CHEBI:17151"/>
        <dbReference type="ChEBI" id="CHEBI:57540"/>
        <dbReference type="ChEBI" id="CHEBI:57945"/>
        <dbReference type="EC" id="1.1.1.9"/>
    </reaction>
</comment>
<comment type="catalytic activity">
    <reaction evidence="4">
        <text>keto-D-fructose + NADH + H(+) = D-sorbitol + NAD(+)</text>
        <dbReference type="Rhea" id="RHEA:33031"/>
        <dbReference type="ChEBI" id="CHEBI:15378"/>
        <dbReference type="ChEBI" id="CHEBI:17924"/>
        <dbReference type="ChEBI" id="CHEBI:48095"/>
        <dbReference type="ChEBI" id="CHEBI:57540"/>
        <dbReference type="ChEBI" id="CHEBI:57945"/>
    </reaction>
</comment>
<comment type="catalytic activity">
    <reaction evidence="4">
        <text>L-iditol + NAD(+) = keto-L-sorbose + NADH + H(+)</text>
        <dbReference type="Rhea" id="RHEA:10160"/>
        <dbReference type="ChEBI" id="CHEBI:13172"/>
        <dbReference type="ChEBI" id="CHEBI:15378"/>
        <dbReference type="ChEBI" id="CHEBI:18202"/>
        <dbReference type="ChEBI" id="CHEBI:57540"/>
        <dbReference type="ChEBI" id="CHEBI:57945"/>
        <dbReference type="EC" id="1.1.1.14"/>
    </reaction>
</comment>
<comment type="cofactor">
    <cofactor evidence="4">
        <name>Zn(2+)</name>
        <dbReference type="ChEBI" id="CHEBI:29105"/>
    </cofactor>
    <text evidence="4">Binds 1 zinc ion per subunit.</text>
</comment>
<comment type="activity regulation">
    <text evidence="4">Inhibited in vitro by metal chelators such as EDTA and 1,10-phenanthroline.</text>
</comment>
<comment type="biophysicochemical properties">
    <kinetics>
        <KM evidence="4">18 mM for D-sorbitol (at pH 8.0)</KM>
        <KM evidence="4">3.2 mM for xylitol (at pH 8.0)</KM>
        <KM evidence="4">20 mM for L-iditol (at pH 8.0)</KM>
        <KM evidence="4">67 mM for ribitol (at pH 8.0)</KM>
        <KM evidence="4">381 mM for D-mannitol (at pH 8.0)</KM>
        <KM evidence="4">268 mM for L-threitol (at pH 8.0)</KM>
        <KM evidence="4">180 mM for D-fructose (at pH 7.4)</KM>
        <KM evidence="4">670 mM for L-sorbose (at pH 7.4)</KM>
        <KM evidence="4">260 mM for D-ribulose (at pH 7.4)</KM>
        <KM evidence="4">0.052 mM for NADH (at pH 7.4)</KM>
        <KM evidence="4">0.089 mM for NAD(+) (at pH 8.0)</KM>
        <text evidence="4">kcat is 29 sec(-1) for D-sorbitol oxidation (at pH 8.0). kcat is 26 sec(-1) for xylitol oxidation (at pH 8.0). kcat is 21 sec(-1) for L-iditol oxidation (at pH 8.0). kcat is 22 sec(-1) for ribitol oxidation (at pH 8.0). kcat is 24 sec(-1) for D-mannitol oxidation (at pH 8.0). kcat is 12 sec(-1) for L-threitol oxidation (at pH 8.0). kcat is 162 sec(-1) for D-fructose reduction (at pH 7.4). kcat is 153 sec(-1) for L-sorbose reduction (at pH 7.4). kcat is 198 sec(-1) for D-ribulose reduction (at pH 7.4).</text>
    </kinetics>
    <phDependence>
        <text evidence="4">Optimum pH is about 9 for D-sorbitol oxidation, and 7.4 for D-fructose reduction.</text>
    </phDependence>
</comment>
<comment type="subunit">
    <text evidence="4">Homotetramer.</text>
</comment>
<comment type="subcellular location">
    <subcellularLocation>
        <location evidence="3">Mitochondrion membrane</location>
        <topology evidence="3">Peripheral membrane protein</topology>
    </subcellularLocation>
    <subcellularLocation>
        <location evidence="3">Cell projection</location>
        <location evidence="3">Cilium</location>
        <location evidence="3">Flagellum</location>
    </subcellularLocation>
    <text evidence="3">Associated with mitochondria of the midpiece and near the plasma membrane in the principal piece of the flagellum. Also found in the epididymosome, secreted by the epididymal epithelium and that transfers proteins from the epididymal fluid to the sperm surface.</text>
</comment>
<comment type="tissue specificity">
    <text evidence="4">Expressed in lens.</text>
</comment>
<comment type="similarity">
    <text evidence="6">Belongs to the zinc-containing alcohol dehydrogenase family.</text>
</comment>
<gene>
    <name type="primary">SORD</name>
</gene>
<dbReference type="EC" id="1.1.1.-" evidence="4"/>
<dbReference type="EC" id="1.1.1.14" evidence="4"/>
<dbReference type="EC" id="1.1.1.9" evidence="4"/>
<dbReference type="EMBL" id="BT021766">
    <property type="protein sequence ID" value="AAX46613.1"/>
    <property type="molecule type" value="mRNA"/>
</dbReference>
<dbReference type="EMBL" id="BC122783">
    <property type="protein sequence ID" value="AAI22784.2"/>
    <property type="molecule type" value="mRNA"/>
</dbReference>
<dbReference type="RefSeq" id="NP_001032397.1">
    <property type="nucleotide sequence ID" value="NM_001037320.1"/>
</dbReference>
<dbReference type="SMR" id="Q58D31"/>
<dbReference type="FunCoup" id="Q58D31">
    <property type="interactions" value="1190"/>
</dbReference>
<dbReference type="STRING" id="9913.ENSBTAP00000068065"/>
<dbReference type="PaxDb" id="9913-ENSBTAP00000035716"/>
<dbReference type="PeptideAtlas" id="Q58D31"/>
<dbReference type="GeneID" id="508954"/>
<dbReference type="KEGG" id="bta:508954"/>
<dbReference type="CTD" id="6652"/>
<dbReference type="VEuPathDB" id="HostDB:ENSBTAG00000025496"/>
<dbReference type="eggNOG" id="KOG0024">
    <property type="taxonomic scope" value="Eukaryota"/>
</dbReference>
<dbReference type="HOGENOM" id="CLU_026673_11_5_1"/>
<dbReference type="InParanoid" id="Q58D31"/>
<dbReference type="OMA" id="FETWYAM"/>
<dbReference type="OrthoDB" id="1879366at2759"/>
<dbReference type="TreeFam" id="TF313060"/>
<dbReference type="Reactome" id="R-BTA-5652227">
    <property type="pathway name" value="Fructose biosynthesis"/>
</dbReference>
<dbReference type="Reactome" id="R-BTA-5661270">
    <property type="pathway name" value="Formation of xylulose-5-phosphate"/>
</dbReference>
<dbReference type="SABIO-RK" id="Q58D31"/>
<dbReference type="Proteomes" id="UP000009136">
    <property type="component" value="Chromosome 10"/>
</dbReference>
<dbReference type="Bgee" id="ENSBTAG00000025496">
    <property type="expression patterns" value="Expressed in liver and 105 other cell types or tissues"/>
</dbReference>
<dbReference type="GO" id="GO:0031966">
    <property type="term" value="C:mitochondrial membrane"/>
    <property type="evidence" value="ECO:0007669"/>
    <property type="project" value="UniProtKB-SubCell"/>
</dbReference>
<dbReference type="GO" id="GO:0031514">
    <property type="term" value="C:motile cilium"/>
    <property type="evidence" value="ECO:0000250"/>
    <property type="project" value="UniProtKB"/>
</dbReference>
<dbReference type="GO" id="GO:0046526">
    <property type="term" value="F:D-xylulose reductase activity"/>
    <property type="evidence" value="ECO:0007669"/>
    <property type="project" value="UniProtKB-EC"/>
</dbReference>
<dbReference type="GO" id="GO:0003939">
    <property type="term" value="F:L-iditol 2-dehydrogenase (NAD+) activity"/>
    <property type="evidence" value="ECO:0000318"/>
    <property type="project" value="GO_Central"/>
</dbReference>
<dbReference type="GO" id="GO:0008270">
    <property type="term" value="F:zinc ion binding"/>
    <property type="evidence" value="ECO:0007669"/>
    <property type="project" value="InterPro"/>
</dbReference>
<dbReference type="GO" id="GO:0030317">
    <property type="term" value="P:flagellated sperm motility"/>
    <property type="evidence" value="ECO:0000250"/>
    <property type="project" value="UniProtKB"/>
</dbReference>
<dbReference type="GO" id="GO:0006062">
    <property type="term" value="P:sorbitol catabolic process"/>
    <property type="evidence" value="ECO:0000318"/>
    <property type="project" value="GO_Central"/>
</dbReference>
<dbReference type="CDD" id="cd05285">
    <property type="entry name" value="sorbitol_DH"/>
    <property type="match status" value="1"/>
</dbReference>
<dbReference type="FunFam" id="3.40.50.720:FF:000068">
    <property type="entry name" value="Sorbitol dehydrogenase"/>
    <property type="match status" value="1"/>
</dbReference>
<dbReference type="Gene3D" id="3.90.180.10">
    <property type="entry name" value="Medium-chain alcohol dehydrogenases, catalytic domain"/>
    <property type="match status" value="1"/>
</dbReference>
<dbReference type="Gene3D" id="3.40.50.720">
    <property type="entry name" value="NAD(P)-binding Rossmann-like Domain"/>
    <property type="match status" value="1"/>
</dbReference>
<dbReference type="InterPro" id="IPR013149">
    <property type="entry name" value="ADH-like_C"/>
</dbReference>
<dbReference type="InterPro" id="IPR013154">
    <property type="entry name" value="ADH-like_N"/>
</dbReference>
<dbReference type="InterPro" id="IPR002328">
    <property type="entry name" value="ADH_Zn_CS"/>
</dbReference>
<dbReference type="InterPro" id="IPR011032">
    <property type="entry name" value="GroES-like_sf"/>
</dbReference>
<dbReference type="InterPro" id="IPR036291">
    <property type="entry name" value="NAD(P)-bd_dom_sf"/>
</dbReference>
<dbReference type="InterPro" id="IPR020843">
    <property type="entry name" value="PKS_ER"/>
</dbReference>
<dbReference type="InterPro" id="IPR045306">
    <property type="entry name" value="SDH-like"/>
</dbReference>
<dbReference type="PANTHER" id="PTHR43161">
    <property type="entry name" value="SORBITOL DEHYDROGENASE"/>
    <property type="match status" value="1"/>
</dbReference>
<dbReference type="PANTHER" id="PTHR43161:SF9">
    <property type="entry name" value="SORBITOL DEHYDROGENASE"/>
    <property type="match status" value="1"/>
</dbReference>
<dbReference type="Pfam" id="PF08240">
    <property type="entry name" value="ADH_N"/>
    <property type="match status" value="1"/>
</dbReference>
<dbReference type="Pfam" id="PF00107">
    <property type="entry name" value="ADH_zinc_N"/>
    <property type="match status" value="1"/>
</dbReference>
<dbReference type="SMART" id="SM00829">
    <property type="entry name" value="PKS_ER"/>
    <property type="match status" value="1"/>
</dbReference>
<dbReference type="SUPFAM" id="SSF50129">
    <property type="entry name" value="GroES-like"/>
    <property type="match status" value="1"/>
</dbReference>
<dbReference type="SUPFAM" id="SSF51735">
    <property type="entry name" value="NAD(P)-binding Rossmann-fold domains"/>
    <property type="match status" value="1"/>
</dbReference>
<dbReference type="PROSITE" id="PS00059">
    <property type="entry name" value="ADH_ZINC"/>
    <property type="match status" value="1"/>
</dbReference>
<organism>
    <name type="scientific">Bos taurus</name>
    <name type="common">Bovine</name>
    <dbReference type="NCBI Taxonomy" id="9913"/>
    <lineage>
        <taxon>Eukaryota</taxon>
        <taxon>Metazoa</taxon>
        <taxon>Chordata</taxon>
        <taxon>Craniata</taxon>
        <taxon>Vertebrata</taxon>
        <taxon>Euteleostomi</taxon>
        <taxon>Mammalia</taxon>
        <taxon>Eutheria</taxon>
        <taxon>Laurasiatheria</taxon>
        <taxon>Artiodactyla</taxon>
        <taxon>Ruminantia</taxon>
        <taxon>Pecora</taxon>
        <taxon>Bovidae</taxon>
        <taxon>Bovinae</taxon>
        <taxon>Bos</taxon>
    </lineage>
</organism>
<proteinExistence type="evidence at protein level"/>
<evidence type="ECO:0000250" key="1">
    <source>
        <dbReference type="UniProtKB" id="P07846"/>
    </source>
</evidence>
<evidence type="ECO:0000250" key="2">
    <source>
        <dbReference type="UniProtKB" id="Q00796"/>
    </source>
</evidence>
<evidence type="ECO:0000250" key="3">
    <source>
        <dbReference type="UniProtKB" id="Q64442"/>
    </source>
</evidence>
<evidence type="ECO:0000269" key="4">
    <source>
    </source>
</evidence>
<evidence type="ECO:0000303" key="5">
    <source>
    </source>
</evidence>
<evidence type="ECO:0000305" key="6"/>
<evidence type="ECO:0000305" key="7">
    <source>
    </source>
</evidence>
<feature type="chain" id="PRO_0000239652" description="Sorbitol dehydrogenase">
    <location>
        <begin position="1"/>
        <end position="356"/>
    </location>
</feature>
<feature type="binding site" evidence="1">
    <location>
        <position position="44"/>
    </location>
    <ligand>
        <name>Zn(2+)</name>
        <dbReference type="ChEBI" id="CHEBI:29105"/>
        <note>catalytic</note>
    </ligand>
</feature>
<feature type="binding site" evidence="1">
    <location>
        <position position="50"/>
    </location>
    <ligand>
        <name>substrate</name>
    </ligand>
</feature>
<feature type="binding site" evidence="1">
    <location>
        <position position="69"/>
    </location>
    <ligand>
        <name>Zn(2+)</name>
        <dbReference type="ChEBI" id="CHEBI:29105"/>
        <note>catalytic</note>
    </ligand>
</feature>
<feature type="binding site" evidence="1">
    <location>
        <position position="70"/>
    </location>
    <ligand>
        <name>Zn(2+)</name>
        <dbReference type="ChEBI" id="CHEBI:29105"/>
        <note>catalytic</note>
    </ligand>
</feature>
<feature type="binding site" evidence="1">
    <location>
        <position position="155"/>
    </location>
    <ligand>
        <name>substrate</name>
    </ligand>
</feature>
<feature type="binding site" evidence="2">
    <location>
        <position position="183"/>
    </location>
    <ligand>
        <name>NAD(+)</name>
        <dbReference type="ChEBI" id="CHEBI:57540"/>
    </ligand>
</feature>
<feature type="binding site" evidence="2">
    <location>
        <position position="203"/>
    </location>
    <ligand>
        <name>NAD(+)</name>
        <dbReference type="ChEBI" id="CHEBI:57540"/>
    </ligand>
</feature>
<feature type="binding site" evidence="2">
    <location>
        <position position="208"/>
    </location>
    <ligand>
        <name>NAD(+)</name>
        <dbReference type="ChEBI" id="CHEBI:57540"/>
    </ligand>
</feature>
<feature type="binding site" evidence="2">
    <location>
        <begin position="272"/>
        <end position="274"/>
    </location>
    <ligand>
        <name>NAD(+)</name>
        <dbReference type="ChEBI" id="CHEBI:57540"/>
    </ligand>
</feature>
<feature type="binding site" evidence="2">
    <location>
        <begin position="296"/>
        <end position="298"/>
    </location>
    <ligand>
        <name>NAD(+)</name>
        <dbReference type="ChEBI" id="CHEBI:57540"/>
    </ligand>
</feature>
<feature type="binding site" evidence="1">
    <location>
        <position position="298"/>
    </location>
    <ligand>
        <name>substrate</name>
    </ligand>
</feature>
<feature type="binding site" evidence="1">
    <location>
        <position position="299"/>
    </location>
    <ligand>
        <name>substrate</name>
    </ligand>
</feature>
<feature type="modified residue" description="Phosphoserine" evidence="2">
    <location>
        <position position="210"/>
    </location>
</feature>
<feature type="modified residue" description="Phosphoserine" evidence="2">
    <location>
        <position position="224"/>
    </location>
</feature>
<sequence>MAAAKPENLSLVVHGPGDLRLENYPIPEPGPNEVLLKMHSVGICGSDVHYWQHGRIGDFVVKKPMVLGHEASGTVVKVGSLVRHLQPGDRVAIEPGAPRETDEFCKIGRYNLSPTIFFCATPPDDGNLCRFYKHNANFCYKLPDNVTFEEGALIEPLSVGIHACRRAGVTLGNKVLVCGAGPIGLVSLLAAKAMGAAQVVVTDLSASRLSKAKEVGADFILQISNESPQEIAKKVEGLLGSKPEVTIECTGVETSIQAGIYATHSGGTLVLVGLGSEMTSVPLVHAATREVDIKGVFRYCNTWPMAISMLASKSVNVKPLVTHRFPLEKALEAFETSKKGLGLKVMIKCDPNDQNP</sequence>
<protein>
    <recommendedName>
        <fullName evidence="5">Sorbitol dehydrogenase</fullName>
        <shortName evidence="5">SDH</shortName>
        <ecNumber evidence="4">1.1.1.-</ecNumber>
    </recommendedName>
    <alternativeName>
        <fullName evidence="7">L-iditol 2-dehydrogenase</fullName>
        <ecNumber evidence="4">1.1.1.14</ecNumber>
    </alternativeName>
    <alternativeName>
        <fullName evidence="6">Polyol dehydrogenase</fullName>
    </alternativeName>
    <alternativeName>
        <fullName evidence="7">Xylitol dehydrogenase</fullName>
        <shortName>XDH</shortName>
        <ecNumber evidence="4">1.1.1.9</ecNumber>
    </alternativeName>
</protein>
<reference key="1">
    <citation type="journal article" date="2005" name="BMC Genomics">
        <title>Characterization of 954 bovine full-CDS cDNA sequences.</title>
        <authorList>
            <person name="Harhay G.P."/>
            <person name="Sonstegard T.S."/>
            <person name="Keele J.W."/>
            <person name="Heaton M.P."/>
            <person name="Clawson M.L."/>
            <person name="Snelling W.M."/>
            <person name="Wiedmann R.T."/>
            <person name="Van Tassell C.P."/>
            <person name="Smith T.P.L."/>
        </authorList>
    </citation>
    <scope>NUCLEOTIDE SEQUENCE [LARGE SCALE MRNA]</scope>
</reference>
<reference key="2">
    <citation type="submission" date="2006-08" db="EMBL/GenBank/DDBJ databases">
        <authorList>
            <consortium name="NIH - Mammalian Gene Collection (MGC) project"/>
        </authorList>
    </citation>
    <scope>NUCLEOTIDE SEQUENCE [LARGE SCALE MRNA]</scope>
    <source>
        <strain>Hereford</strain>
        <tissue>Hypothalamus</tissue>
    </source>
</reference>
<reference key="3">
    <citation type="journal article" date="1997" name="Arch. Biochem. Biophys.">
        <title>Sorbitol dehydrogenase from bovine lens: purification and properties.</title>
        <authorList>
            <person name="Marini I."/>
            <person name="Bucchioni L."/>
            <person name="Borella P."/>
            <person name="Del Corso A."/>
            <person name="Mura U."/>
        </authorList>
    </citation>
    <scope>FUNCTION</scope>
    <scope>CATALYTIC ACTIVITY</scope>
    <scope>COFACTOR</scope>
    <scope>SUBSTRATE SPECIFICITY</scope>
    <scope>BIOPHYSICOCHEMICAL PROPERTIES</scope>
    <scope>ACTIVITY REGULATION</scope>
    <scope>SUBUNIT</scope>
    <scope>TISSUE SPECIFICITY</scope>
</reference>
<accession>Q58D31</accession>
<accession>Q0II66</accession>
<keyword id="KW-0966">Cell projection</keyword>
<keyword id="KW-0969">Cilium</keyword>
<keyword id="KW-0282">Flagellum</keyword>
<keyword id="KW-0472">Membrane</keyword>
<keyword id="KW-0479">Metal-binding</keyword>
<keyword id="KW-0496">Mitochondrion</keyword>
<keyword id="KW-0520">NAD</keyword>
<keyword id="KW-0560">Oxidoreductase</keyword>
<keyword id="KW-0597">Phosphoprotein</keyword>
<keyword id="KW-1185">Reference proteome</keyword>
<keyword id="KW-0862">Zinc</keyword>